<protein>
    <recommendedName>
        <fullName evidence="6">MICOS complex subunit MIC60, mitochondrial</fullName>
        <shortName evidence="6">AtMic60</shortName>
    </recommendedName>
    <alternativeName>
        <fullName evidence="7">Mitochondrial contact site and cristae organizing system 60 kDa subunit</fullName>
    </alternativeName>
    <alternativeName>
        <fullName evidence="7">Mitofilin</fullName>
    </alternativeName>
</protein>
<name>MIC60_ARATH</name>
<organism>
    <name type="scientific">Arabidopsis thaliana</name>
    <name type="common">Mouse-ear cress</name>
    <dbReference type="NCBI Taxonomy" id="3702"/>
    <lineage>
        <taxon>Eukaryota</taxon>
        <taxon>Viridiplantae</taxon>
        <taxon>Streptophyta</taxon>
        <taxon>Embryophyta</taxon>
        <taxon>Tracheophyta</taxon>
        <taxon>Spermatophyta</taxon>
        <taxon>Magnoliopsida</taxon>
        <taxon>eudicotyledons</taxon>
        <taxon>Gunneridae</taxon>
        <taxon>Pentapetalae</taxon>
        <taxon>rosids</taxon>
        <taxon>malvids</taxon>
        <taxon>Brassicales</taxon>
        <taxon>Brassicaceae</taxon>
        <taxon>Camelineae</taxon>
        <taxon>Arabidopsis</taxon>
    </lineage>
</organism>
<dbReference type="EMBL" id="AL022605">
    <property type="protein sequence ID" value="CAA18755.1"/>
    <property type="status" value="ALT_SEQ"/>
    <property type="molecule type" value="Genomic_DNA"/>
</dbReference>
<dbReference type="EMBL" id="AL161595">
    <property type="protein sequence ID" value="CAB80632.1"/>
    <property type="status" value="ALT_SEQ"/>
    <property type="molecule type" value="Genomic_DNA"/>
</dbReference>
<dbReference type="EMBL" id="CP002687">
    <property type="protein sequence ID" value="AEE87105.1"/>
    <property type="molecule type" value="Genomic_DNA"/>
</dbReference>
<dbReference type="EMBL" id="AF361810">
    <property type="protein sequence ID" value="AAK32823.1"/>
    <property type="molecule type" value="mRNA"/>
</dbReference>
<dbReference type="EMBL" id="AY124859">
    <property type="protein sequence ID" value="AAM70568.1"/>
    <property type="molecule type" value="mRNA"/>
</dbReference>
<dbReference type="EMBL" id="BT000714">
    <property type="protein sequence ID" value="AAN31857.1"/>
    <property type="molecule type" value="mRNA"/>
</dbReference>
<dbReference type="PIR" id="T05006">
    <property type="entry name" value="T05006"/>
</dbReference>
<dbReference type="RefSeq" id="NP_568066.1">
    <property type="nucleotide sequence ID" value="NM_120130.3"/>
</dbReference>
<dbReference type="SMR" id="Q9ASV5"/>
<dbReference type="FunCoup" id="Q9ASV5">
    <property type="interactions" value="1806"/>
</dbReference>
<dbReference type="IntAct" id="Q9ASV5">
    <property type="interactions" value="1"/>
</dbReference>
<dbReference type="STRING" id="3702.Q9ASV5"/>
<dbReference type="TCDB" id="9.B.216.1.6">
    <property type="family name" value="the micos complex component, mic60 (mic60) family"/>
</dbReference>
<dbReference type="iPTMnet" id="Q9ASV5"/>
<dbReference type="PaxDb" id="3702-AT4G39690.1"/>
<dbReference type="ProteomicsDB" id="193563"/>
<dbReference type="EnsemblPlants" id="AT4G39690.1">
    <property type="protein sequence ID" value="AT4G39690.1"/>
    <property type="gene ID" value="AT4G39690"/>
</dbReference>
<dbReference type="GeneID" id="830124"/>
<dbReference type="Gramene" id="AT4G39690.1">
    <property type="protein sequence ID" value="AT4G39690.1"/>
    <property type="gene ID" value="AT4G39690"/>
</dbReference>
<dbReference type="KEGG" id="ath:AT4G39690"/>
<dbReference type="Araport" id="AT4G39690"/>
<dbReference type="TAIR" id="AT4G39690">
    <property type="gene designation" value="MIC60"/>
</dbReference>
<dbReference type="eggNOG" id="ENOG502QTA5">
    <property type="taxonomic scope" value="Eukaryota"/>
</dbReference>
<dbReference type="HOGENOM" id="CLU_028777_0_0_1"/>
<dbReference type="InParanoid" id="Q9ASV5"/>
<dbReference type="OMA" id="GYLDQYI"/>
<dbReference type="CD-CODE" id="4299E36E">
    <property type="entry name" value="Nucleolus"/>
</dbReference>
<dbReference type="PRO" id="PR:Q9ASV5"/>
<dbReference type="Proteomes" id="UP000006548">
    <property type="component" value="Chromosome 4"/>
</dbReference>
<dbReference type="ExpressionAtlas" id="Q9ASV5">
    <property type="expression patterns" value="baseline and differential"/>
</dbReference>
<dbReference type="GO" id="GO:0098800">
    <property type="term" value="C:inner mitochondrial membrane protein complex"/>
    <property type="evidence" value="ECO:0000314"/>
    <property type="project" value="TAIR"/>
</dbReference>
<dbReference type="GO" id="GO:0005743">
    <property type="term" value="C:mitochondrial inner membrane"/>
    <property type="evidence" value="ECO:0000314"/>
    <property type="project" value="UniProtKB"/>
</dbReference>
<dbReference type="GO" id="GO:0005739">
    <property type="term" value="C:mitochondrion"/>
    <property type="evidence" value="ECO:0007005"/>
    <property type="project" value="TAIR"/>
</dbReference>
<dbReference type="GO" id="GO:0005886">
    <property type="term" value="C:plasma membrane"/>
    <property type="evidence" value="ECO:0007005"/>
    <property type="project" value="TAIR"/>
</dbReference>
<dbReference type="GO" id="GO:1901612">
    <property type="term" value="F:cardiolipin binding"/>
    <property type="evidence" value="ECO:0000314"/>
    <property type="project" value="TAIR"/>
</dbReference>
<dbReference type="GO" id="GO:0016036">
    <property type="term" value="P:cellular response to phosphate starvation"/>
    <property type="evidence" value="ECO:0000270"/>
    <property type="project" value="UniProtKB"/>
</dbReference>
<dbReference type="GO" id="GO:0006869">
    <property type="term" value="P:lipid transport"/>
    <property type="evidence" value="ECO:0007669"/>
    <property type="project" value="UniProtKB-KW"/>
</dbReference>
<dbReference type="GO" id="GO:0032368">
    <property type="term" value="P:regulation of lipid transport"/>
    <property type="evidence" value="ECO:0000314"/>
    <property type="project" value="UniProtKB"/>
</dbReference>
<dbReference type="GO" id="GO:0097035">
    <property type="term" value="P:regulation of membrane lipid distribution"/>
    <property type="evidence" value="ECO:0000315"/>
    <property type="project" value="TAIR"/>
</dbReference>
<dbReference type="InterPro" id="IPR019133">
    <property type="entry name" value="MIC60"/>
</dbReference>
<dbReference type="PANTHER" id="PTHR15415:SF7">
    <property type="entry name" value="MICOS COMPLEX SUBUNIT MIC60"/>
    <property type="match status" value="1"/>
</dbReference>
<dbReference type="PANTHER" id="PTHR15415">
    <property type="entry name" value="MITOFILIN"/>
    <property type="match status" value="1"/>
</dbReference>
<dbReference type="Pfam" id="PF09731">
    <property type="entry name" value="Mitofilin"/>
    <property type="match status" value="1"/>
</dbReference>
<keyword id="KW-0175">Coiled coil</keyword>
<keyword id="KW-0445">Lipid transport</keyword>
<keyword id="KW-0446">Lipid-binding</keyword>
<keyword id="KW-0472">Membrane</keyword>
<keyword id="KW-0496">Mitochondrion</keyword>
<keyword id="KW-0999">Mitochondrion inner membrane</keyword>
<keyword id="KW-1185">Reference proteome</keyword>
<keyword id="KW-0809">Transit peptide</keyword>
<keyword id="KW-0812">Transmembrane</keyword>
<keyword id="KW-1133">Transmembrane helix</keyword>
<keyword id="KW-0813">Transport</keyword>
<reference key="1">
    <citation type="journal article" date="1999" name="Nature">
        <title>Sequence and analysis of chromosome 4 of the plant Arabidopsis thaliana.</title>
        <authorList>
            <person name="Mayer K.F.X."/>
            <person name="Schueller C."/>
            <person name="Wambutt R."/>
            <person name="Murphy G."/>
            <person name="Volckaert G."/>
            <person name="Pohl T."/>
            <person name="Duesterhoeft A."/>
            <person name="Stiekema W."/>
            <person name="Entian K.-D."/>
            <person name="Terryn N."/>
            <person name="Harris B."/>
            <person name="Ansorge W."/>
            <person name="Brandt P."/>
            <person name="Grivell L.A."/>
            <person name="Rieger M."/>
            <person name="Weichselgartner M."/>
            <person name="de Simone V."/>
            <person name="Obermaier B."/>
            <person name="Mache R."/>
            <person name="Mueller M."/>
            <person name="Kreis M."/>
            <person name="Delseny M."/>
            <person name="Puigdomenech P."/>
            <person name="Watson M."/>
            <person name="Schmidtheini T."/>
            <person name="Reichert B."/>
            <person name="Portetelle D."/>
            <person name="Perez-Alonso M."/>
            <person name="Boutry M."/>
            <person name="Bancroft I."/>
            <person name="Vos P."/>
            <person name="Hoheisel J."/>
            <person name="Zimmermann W."/>
            <person name="Wedler H."/>
            <person name="Ridley P."/>
            <person name="Langham S.-A."/>
            <person name="McCullagh B."/>
            <person name="Bilham L."/>
            <person name="Robben J."/>
            <person name="van der Schueren J."/>
            <person name="Grymonprez B."/>
            <person name="Chuang Y.-J."/>
            <person name="Vandenbussche F."/>
            <person name="Braeken M."/>
            <person name="Weltjens I."/>
            <person name="Voet M."/>
            <person name="Bastiaens I."/>
            <person name="Aert R."/>
            <person name="Defoor E."/>
            <person name="Weitzenegger T."/>
            <person name="Bothe G."/>
            <person name="Ramsperger U."/>
            <person name="Hilbert H."/>
            <person name="Braun M."/>
            <person name="Holzer E."/>
            <person name="Brandt A."/>
            <person name="Peters S."/>
            <person name="van Staveren M."/>
            <person name="Dirkse W."/>
            <person name="Mooijman P."/>
            <person name="Klein Lankhorst R."/>
            <person name="Rose M."/>
            <person name="Hauf J."/>
            <person name="Koetter P."/>
            <person name="Berneiser S."/>
            <person name="Hempel S."/>
            <person name="Feldpausch M."/>
            <person name="Lamberth S."/>
            <person name="Van den Daele H."/>
            <person name="De Keyser A."/>
            <person name="Buysshaert C."/>
            <person name="Gielen J."/>
            <person name="Villarroel R."/>
            <person name="De Clercq R."/>
            <person name="van Montagu M."/>
            <person name="Rogers J."/>
            <person name="Cronin A."/>
            <person name="Quail M.A."/>
            <person name="Bray-Allen S."/>
            <person name="Clark L."/>
            <person name="Doggett J."/>
            <person name="Hall S."/>
            <person name="Kay M."/>
            <person name="Lennard N."/>
            <person name="McLay K."/>
            <person name="Mayes R."/>
            <person name="Pettett A."/>
            <person name="Rajandream M.A."/>
            <person name="Lyne M."/>
            <person name="Benes V."/>
            <person name="Rechmann S."/>
            <person name="Borkova D."/>
            <person name="Bloecker H."/>
            <person name="Scharfe M."/>
            <person name="Grimm M."/>
            <person name="Loehnert T.-H."/>
            <person name="Dose S."/>
            <person name="de Haan M."/>
            <person name="Maarse A.C."/>
            <person name="Schaefer M."/>
            <person name="Mueller-Auer S."/>
            <person name="Gabel C."/>
            <person name="Fuchs M."/>
            <person name="Fartmann B."/>
            <person name="Granderath K."/>
            <person name="Dauner D."/>
            <person name="Herzl A."/>
            <person name="Neumann S."/>
            <person name="Argiriou A."/>
            <person name="Vitale D."/>
            <person name="Liguori R."/>
            <person name="Piravandi E."/>
            <person name="Massenet O."/>
            <person name="Quigley F."/>
            <person name="Clabauld G."/>
            <person name="Muendlein A."/>
            <person name="Felber R."/>
            <person name="Schnabl S."/>
            <person name="Hiller R."/>
            <person name="Schmidt W."/>
            <person name="Lecharny A."/>
            <person name="Aubourg S."/>
            <person name="Chefdor F."/>
            <person name="Cooke R."/>
            <person name="Berger C."/>
            <person name="Monfort A."/>
            <person name="Casacuberta E."/>
            <person name="Gibbons T."/>
            <person name="Weber N."/>
            <person name="Vandenbol M."/>
            <person name="Bargues M."/>
            <person name="Terol J."/>
            <person name="Torres A."/>
            <person name="Perez-Perez A."/>
            <person name="Purnelle B."/>
            <person name="Bent E."/>
            <person name="Johnson S."/>
            <person name="Tacon D."/>
            <person name="Jesse T."/>
            <person name="Heijnen L."/>
            <person name="Schwarz S."/>
            <person name="Scholler P."/>
            <person name="Heber S."/>
            <person name="Francs P."/>
            <person name="Bielke C."/>
            <person name="Frishman D."/>
            <person name="Haase D."/>
            <person name="Lemcke K."/>
            <person name="Mewes H.-W."/>
            <person name="Stocker S."/>
            <person name="Zaccaria P."/>
            <person name="Bevan M."/>
            <person name="Wilson R.K."/>
            <person name="de la Bastide M."/>
            <person name="Habermann K."/>
            <person name="Parnell L."/>
            <person name="Dedhia N."/>
            <person name="Gnoj L."/>
            <person name="Schutz K."/>
            <person name="Huang E."/>
            <person name="Spiegel L."/>
            <person name="Sekhon M."/>
            <person name="Murray J."/>
            <person name="Sheet P."/>
            <person name="Cordes M."/>
            <person name="Abu-Threideh J."/>
            <person name="Stoneking T."/>
            <person name="Kalicki J."/>
            <person name="Graves T."/>
            <person name="Harmon G."/>
            <person name="Edwards J."/>
            <person name="Latreille P."/>
            <person name="Courtney L."/>
            <person name="Cloud J."/>
            <person name="Abbott A."/>
            <person name="Scott K."/>
            <person name="Johnson D."/>
            <person name="Minx P."/>
            <person name="Bentley D."/>
            <person name="Fulton B."/>
            <person name="Miller N."/>
            <person name="Greco T."/>
            <person name="Kemp K."/>
            <person name="Kramer J."/>
            <person name="Fulton L."/>
            <person name="Mardis E."/>
            <person name="Dante M."/>
            <person name="Pepin K."/>
            <person name="Hillier L.W."/>
            <person name="Nelson J."/>
            <person name="Spieth J."/>
            <person name="Ryan E."/>
            <person name="Andrews S."/>
            <person name="Geisel C."/>
            <person name="Layman D."/>
            <person name="Du H."/>
            <person name="Ali J."/>
            <person name="Berghoff A."/>
            <person name="Jones K."/>
            <person name="Drone K."/>
            <person name="Cotton M."/>
            <person name="Joshu C."/>
            <person name="Antonoiu B."/>
            <person name="Zidanic M."/>
            <person name="Strong C."/>
            <person name="Sun H."/>
            <person name="Lamar B."/>
            <person name="Yordan C."/>
            <person name="Ma P."/>
            <person name="Zhong J."/>
            <person name="Preston R."/>
            <person name="Vil D."/>
            <person name="Shekher M."/>
            <person name="Matero A."/>
            <person name="Shah R."/>
            <person name="Swaby I.K."/>
            <person name="O'Shaughnessy A."/>
            <person name="Rodriguez M."/>
            <person name="Hoffman J."/>
            <person name="Till S."/>
            <person name="Granat S."/>
            <person name="Shohdy N."/>
            <person name="Hasegawa A."/>
            <person name="Hameed A."/>
            <person name="Lodhi M."/>
            <person name="Johnson A."/>
            <person name="Chen E."/>
            <person name="Marra M.A."/>
            <person name="Martienssen R."/>
            <person name="McCombie W.R."/>
        </authorList>
    </citation>
    <scope>NUCLEOTIDE SEQUENCE [LARGE SCALE GENOMIC DNA]</scope>
    <source>
        <strain>cv. Columbia</strain>
    </source>
</reference>
<reference key="2">
    <citation type="journal article" date="2017" name="Plant J.">
        <title>Araport11: a complete reannotation of the Arabidopsis thaliana reference genome.</title>
        <authorList>
            <person name="Cheng C.Y."/>
            <person name="Krishnakumar V."/>
            <person name="Chan A.P."/>
            <person name="Thibaud-Nissen F."/>
            <person name="Schobel S."/>
            <person name="Town C.D."/>
        </authorList>
    </citation>
    <scope>GENOME REANNOTATION</scope>
    <source>
        <strain>cv. Columbia</strain>
    </source>
</reference>
<reference key="3">
    <citation type="journal article" date="2003" name="Science">
        <title>Empirical analysis of transcriptional activity in the Arabidopsis genome.</title>
        <authorList>
            <person name="Yamada K."/>
            <person name="Lim J."/>
            <person name="Dale J.M."/>
            <person name="Chen H."/>
            <person name="Shinn P."/>
            <person name="Palm C.J."/>
            <person name="Southwick A.M."/>
            <person name="Wu H.C."/>
            <person name="Kim C.J."/>
            <person name="Nguyen M."/>
            <person name="Pham P.K."/>
            <person name="Cheuk R.F."/>
            <person name="Karlin-Newmann G."/>
            <person name="Liu S.X."/>
            <person name="Lam B."/>
            <person name="Sakano H."/>
            <person name="Wu T."/>
            <person name="Yu G."/>
            <person name="Miranda M."/>
            <person name="Quach H.L."/>
            <person name="Tripp M."/>
            <person name="Chang C.H."/>
            <person name="Lee J.M."/>
            <person name="Toriumi M.J."/>
            <person name="Chan M.M."/>
            <person name="Tang C.C."/>
            <person name="Onodera C.S."/>
            <person name="Deng J.M."/>
            <person name="Akiyama K."/>
            <person name="Ansari Y."/>
            <person name="Arakawa T."/>
            <person name="Banh J."/>
            <person name="Banno F."/>
            <person name="Bowser L."/>
            <person name="Brooks S.Y."/>
            <person name="Carninci P."/>
            <person name="Chao Q."/>
            <person name="Choy N."/>
            <person name="Enju A."/>
            <person name="Goldsmith A.D."/>
            <person name="Gurjal M."/>
            <person name="Hansen N.F."/>
            <person name="Hayashizaki Y."/>
            <person name="Johnson-Hopson C."/>
            <person name="Hsuan V.W."/>
            <person name="Iida K."/>
            <person name="Karnes M."/>
            <person name="Khan S."/>
            <person name="Koesema E."/>
            <person name="Ishida J."/>
            <person name="Jiang P.X."/>
            <person name="Jones T."/>
            <person name="Kawai J."/>
            <person name="Kamiya A."/>
            <person name="Meyers C."/>
            <person name="Nakajima M."/>
            <person name="Narusaka M."/>
            <person name="Seki M."/>
            <person name="Sakurai T."/>
            <person name="Satou M."/>
            <person name="Tamse R."/>
            <person name="Vaysberg M."/>
            <person name="Wallender E.K."/>
            <person name="Wong C."/>
            <person name="Yamamura Y."/>
            <person name="Yuan S."/>
            <person name="Shinozaki K."/>
            <person name="Davis R.W."/>
            <person name="Theologis A."/>
            <person name="Ecker J.R."/>
        </authorList>
    </citation>
    <scope>NUCLEOTIDE SEQUENCE [LARGE SCALE MRNA]</scope>
    <source>
        <strain>cv. Columbia</strain>
    </source>
</reference>
<reference key="4">
    <citation type="journal article" date="2016" name="Curr. Biol.">
        <title>AtMic60 is involved in plant mitochondria lipid trafficking and is part of a large complex.</title>
        <authorList>
            <person name="Michaud M."/>
            <person name="Gros V."/>
            <person name="Tardif M."/>
            <person name="Brugiere S."/>
            <person name="Ferro M."/>
            <person name="Prinz W.A."/>
            <person name="Toulmay A."/>
            <person name="Mathur J."/>
            <person name="Wozny M."/>
            <person name="Falconet D."/>
            <person name="Marechal E."/>
            <person name="Block M.A."/>
            <person name="Jouhet J."/>
        </authorList>
    </citation>
    <scope>FUNCTION</scope>
    <scope>DISRUPTION PHENOTYPE</scope>
    <scope>SUBUNIT</scope>
    <scope>INTERACTION WITH TOM40-1</scope>
    <scope>IDENTIFICATION BY MASS SPECTROMETRY</scope>
    <scope>SUBCELLULAR LOCATION</scope>
    <scope>INDUCTION BY PHOSPHATE STARVATION</scope>
    <source>
        <strain>cv. Columbia</strain>
    </source>
</reference>
<reference key="5">
    <citation type="journal article" date="2019" name="Plant Cell">
        <title>Arabidopsis DGD1 SUPPRESSOR1 is a subunit of the mitochondrial contact site and cristae organizing system and affects mitochondrial biogenesis.</title>
        <authorList>
            <person name="Li L."/>
            <person name="Lavell A."/>
            <person name="Meng X."/>
            <person name="Berkowitz O."/>
            <person name="Selinski J."/>
            <person name="van de Meene A."/>
            <person name="Carrie C."/>
            <person name="Benning C."/>
            <person name="Whelan J."/>
            <person name="De Clercq I."/>
            <person name="Wang Y."/>
        </authorList>
    </citation>
    <scope>SUBUNIT</scope>
    <scope>SUBCELLULAR LOCATION</scope>
    <source>
        <strain>cv. Columbia</strain>
    </source>
</reference>
<accession>Q9ASV5</accession>
<accession>O65656</accession>
<comment type="function">
    <text evidence="1 4">Component of the MICOS complex, a large protein complex of the mitochondrial inner membrane that plays crucial roles in the maintenance of crista junctions, inner membrane architecture, and formation of contact sites to the outer membrane (By similarity). Plays a role in keeping cristae membranes connected to the inner boundary membrane. Also promotes protein import via the mitochondrial intermembrane space assembly (MIA) pathway (By similarity). Involved in the maintenance of mitochondria morphology (PubMed:26898467). Binds to glycerolipids such as cardiolipin (CL) (PubMed:26898467). Contributes to the export of phosphatidylethanolamine (PE) from mitochondria and to the import of galactoglycerolipids from plastids during phosphate (Pi) starvation (PubMed:26898467). Promotes lipid desorption from membranes, likely as an initial step for lipid transfer, and regulates probably the tethering between the inner and outer membranes of mitochondria by binding to TOM40 proteins (PubMed:26898467).</text>
</comment>
<comment type="subunit">
    <text evidence="1 4 5">Component of the mitochondrial contact site and cristae organizing system (MICOS) complex (By similarity). The MICOS complex associates with mitochondrial outer membrane proteins (By similarity). Present in a large lipid-enriched complex called mitochondrial transmembrane lipoprotein (MTL) complex made of proteins located in the two mitochondrial membranes, including the TOM complex and the core components of the MICOS complex and containing at least digalactosyldiacylglycerol (DGDG) (PubMed:26898467). Binds to TOM40-1 (PubMed:26898467). Component of a mitochondrial large protein complex that contains, at least, MIC60, DGS1, TOM40, TOM20 proteins, and petC/RISP (PubMed:31118221).</text>
</comment>
<comment type="subcellular location">
    <subcellularLocation>
        <location evidence="4 5">Mitochondrion inner membrane</location>
        <topology evidence="2">Multi-pass membrane protein</topology>
    </subcellularLocation>
</comment>
<comment type="induction">
    <text evidence="4">Accumulates in the mitochondrial transmembrane lipoprotein (MTL) complex during phosphate (Pi) starvation.</text>
</comment>
<comment type="disruption phenotype">
    <text evidence="4">Altered mitochondria morphology leading to the presence of several big mitochondria with a round shape (PubMed:26898467). Altered lipid homeostasis; reduced levels of digalactosyldiacylglycerol (DGDG) in the mitochondrial transmembrane lipoprotein (MTL) complex during phosphate (Pi) starvation, associated with the accumulation of phosphatidylethanolamine (PE) in mitochondrion (PubMed:26898467).</text>
</comment>
<comment type="similarity">
    <text evidence="7">Belongs to the MICOS complex subunit Mic60 family.</text>
</comment>
<comment type="sequence caution" evidence="7">
    <conflict type="erroneous gene model prediction">
        <sequence resource="EMBL-CDS" id="CAA18755"/>
    </conflict>
</comment>
<comment type="sequence caution" evidence="7">
    <conflict type="erroneous gene model prediction">
        <sequence resource="EMBL-CDS" id="CAB80632"/>
    </conflict>
</comment>
<evidence type="ECO:0000250" key="1">
    <source>
        <dbReference type="UniProtKB" id="P36112"/>
    </source>
</evidence>
<evidence type="ECO:0000255" key="2"/>
<evidence type="ECO:0000256" key="3">
    <source>
        <dbReference type="SAM" id="MobiDB-lite"/>
    </source>
</evidence>
<evidence type="ECO:0000269" key="4">
    <source>
    </source>
</evidence>
<evidence type="ECO:0000269" key="5">
    <source>
    </source>
</evidence>
<evidence type="ECO:0000303" key="6">
    <source>
    </source>
</evidence>
<evidence type="ECO:0000305" key="7"/>
<evidence type="ECO:0000312" key="8">
    <source>
        <dbReference type="Araport" id="AT4G39690"/>
    </source>
</evidence>
<evidence type="ECO:0000312" key="9">
    <source>
        <dbReference type="EMBL" id="CAA18755.1"/>
    </source>
</evidence>
<proteinExistence type="evidence at protein level"/>
<gene>
    <name evidence="6" type="primary">MIC60</name>
    <name evidence="8" type="ordered locus">At4g39690</name>
    <name evidence="9" type="ORF">T19P19.80</name>
</gene>
<feature type="transit peptide" description="Mitochondrion" evidence="2">
    <location>
        <begin position="1"/>
        <end position="34"/>
    </location>
</feature>
<feature type="chain" id="PRO_0000456901" description="MICOS complex subunit MIC60, mitochondrial">
    <location>
        <begin position="35"/>
        <end position="650"/>
    </location>
</feature>
<feature type="topological domain" description="Mitochondrial matrix" evidence="7">
    <location>
        <begin position="35"/>
        <end position="74"/>
    </location>
</feature>
<feature type="transmembrane region" description="Helical" evidence="2">
    <location>
        <begin position="75"/>
        <end position="95"/>
    </location>
</feature>
<feature type="topological domain" description="Mitochondrial intermembrane" evidence="7">
    <location>
        <begin position="96"/>
        <end position="549"/>
    </location>
</feature>
<feature type="transmembrane region" description="Helical" evidence="2">
    <location>
        <begin position="550"/>
        <end position="570"/>
    </location>
</feature>
<feature type="topological domain" description="Mitochondrial matrix" evidence="7">
    <location>
        <begin position="571"/>
        <end position="650"/>
    </location>
</feature>
<feature type="region of interest" description="Disordered" evidence="3">
    <location>
        <begin position="26"/>
        <end position="74"/>
    </location>
</feature>
<feature type="region of interest" description="Disordered" evidence="3">
    <location>
        <begin position="121"/>
        <end position="168"/>
    </location>
</feature>
<feature type="region of interest" description="Disordered" evidence="3">
    <location>
        <begin position="239"/>
        <end position="267"/>
    </location>
</feature>
<feature type="region of interest" description="Disordered" evidence="3">
    <location>
        <begin position="284"/>
        <end position="304"/>
    </location>
</feature>
<feature type="coiled-coil region" evidence="2">
    <location>
        <begin position="345"/>
        <end position="369"/>
    </location>
</feature>
<feature type="coiled-coil region" evidence="2">
    <location>
        <begin position="396"/>
        <end position="430"/>
    </location>
</feature>
<feature type="compositionally biased region" description="Polar residues" evidence="3">
    <location>
        <begin position="28"/>
        <end position="40"/>
    </location>
</feature>
<feature type="compositionally biased region" description="Low complexity" evidence="3">
    <location>
        <begin position="284"/>
        <end position="299"/>
    </location>
</feature>
<sequence>MLRKSVLELSSRLSIKRFPRNLGAQRFHLSSSRNASTSGKNGLPGAKPVGKPDASKVDPPKVTPPPPTKGNSSKVVIGGVAIAGAFLVAYQTGYLDQYLGKEQQKLSERIHSDALTEKLEEAHHLNVPSGVEDSTEKDGKVETQPQVTHSEASEGVQSDIELQPESDLSSDRFTYISSNQEETPQETVIDRAEINLPISASEDSGAKPDMPSEIISEAESVKLEAVPKPGDSPIIVNAQSSSVHRESETESASPKDPAALKTPEDGIEREVQLPGSLLKEYNLEGSDTESTGSSSIGEQITKETEAFPNSTEGLKDSYMTEDGKLVLDFLAAIHAAEKQQAHLDAQVFAEELRALKEKYENELRDLRARELMRIEEAAILDKELKRERTKAAAAIKAIQERMEDKLKAELEQKETEAQLALSKAEELAKAEMISTIAKEKAAQIEKMAEADLNIKALSMAFYARSEEARQSHSVHKLALGALALDDTLSKGLPVQKEIDTLQTYLEGTHKDSILGLVLSSLPEEARSNGTDTVLQLNQKFDTLKGTLRHFSLIPPGGGGILAHSLAHVASSLKFKEVDQANGGIESVIKKVDNYLAEGKLAEAAATLEEGVKGSKAEEIVSDWVRRARNRAITEQALTLLQSYATCVSLT</sequence>